<keyword id="KW-0002">3D-structure</keyword>
<keyword id="KW-0067">ATP-binding</keyword>
<keyword id="KW-0143">Chaperone</keyword>
<keyword id="KW-0175">Coiled coil</keyword>
<keyword id="KW-0547">Nucleotide-binding</keyword>
<keyword id="KW-0647">Proteasome</keyword>
<keyword id="KW-1185">Reference proteome</keyword>
<keyword id="KW-0843">Virulence</keyword>
<accession>P9WQN4</accession>
<accession>L0T8W3</accession>
<accession>O33250</accession>
<accession>P63345</accession>
<accession>Q0G9Y7</accession>
<dbReference type="EMBL" id="AE000516">
    <property type="protein sequence ID" value="AAK46458.1"/>
    <property type="molecule type" value="Genomic_DNA"/>
</dbReference>
<dbReference type="PIR" id="F70512">
    <property type="entry name" value="F70512"/>
</dbReference>
<dbReference type="PDB" id="3FP9">
    <property type="method" value="X-ray"/>
    <property type="resolution" value="2.00 A"/>
    <property type="chains" value="A/B/C/D/E/F/G/H/I/J/K/L=98-245"/>
</dbReference>
<dbReference type="PDBsum" id="3FP9"/>
<dbReference type="SMR" id="P9WQN4"/>
<dbReference type="KEGG" id="mtc:MT2175"/>
<dbReference type="PATRIC" id="fig|83331.31.peg.2345"/>
<dbReference type="HOGENOM" id="CLU_036054_0_0_11"/>
<dbReference type="UniPathway" id="UPA00997"/>
<dbReference type="Proteomes" id="UP000001020">
    <property type="component" value="Chromosome"/>
</dbReference>
<dbReference type="GO" id="GO:0022623">
    <property type="term" value="C:proteasome-activating nucleotidase complex"/>
    <property type="evidence" value="ECO:0000314"/>
    <property type="project" value="UniProtKB"/>
</dbReference>
<dbReference type="GO" id="GO:0005524">
    <property type="term" value="F:ATP binding"/>
    <property type="evidence" value="ECO:0007669"/>
    <property type="project" value="UniProtKB-UniRule"/>
</dbReference>
<dbReference type="GO" id="GO:0016887">
    <property type="term" value="F:ATP hydrolysis activity"/>
    <property type="evidence" value="ECO:0007669"/>
    <property type="project" value="UniProtKB-UniRule"/>
</dbReference>
<dbReference type="GO" id="GO:0019941">
    <property type="term" value="P:modification-dependent protein catabolic process"/>
    <property type="evidence" value="ECO:0000315"/>
    <property type="project" value="UniProtKB"/>
</dbReference>
<dbReference type="GO" id="GO:0010498">
    <property type="term" value="P:proteasomal protein catabolic process"/>
    <property type="evidence" value="ECO:0000315"/>
    <property type="project" value="UniProtKB"/>
</dbReference>
<dbReference type="FunFam" id="1.10.8.60:FF:000122">
    <property type="entry name" value="AAA ATPase forming ring-shaped complexes"/>
    <property type="match status" value="1"/>
</dbReference>
<dbReference type="FunFam" id="1.20.5.170:FF:000018">
    <property type="entry name" value="AAA ATPase forming ring-shaped complexes"/>
    <property type="match status" value="1"/>
</dbReference>
<dbReference type="FunFam" id="2.40.50.140:FF:000169">
    <property type="entry name" value="AAA ATPase forming ring-shaped complexes"/>
    <property type="match status" value="1"/>
</dbReference>
<dbReference type="FunFam" id="3.40.50.300:FF:000155">
    <property type="entry name" value="AAA ATPase forming ring-shaped complexes"/>
    <property type="match status" value="1"/>
</dbReference>
<dbReference type="Gene3D" id="1.10.8.60">
    <property type="match status" value="1"/>
</dbReference>
<dbReference type="Gene3D" id="1.20.5.170">
    <property type="match status" value="1"/>
</dbReference>
<dbReference type="Gene3D" id="2.40.50.140">
    <property type="entry name" value="Nucleic acid-binding proteins"/>
    <property type="match status" value="2"/>
</dbReference>
<dbReference type="Gene3D" id="3.40.50.300">
    <property type="entry name" value="P-loop containing nucleotide triphosphate hydrolases"/>
    <property type="match status" value="1"/>
</dbReference>
<dbReference type="HAMAP" id="MF_02112">
    <property type="entry name" value="ARC_ATPase"/>
    <property type="match status" value="1"/>
</dbReference>
<dbReference type="InterPro" id="IPR003593">
    <property type="entry name" value="AAA+_ATPase"/>
</dbReference>
<dbReference type="InterPro" id="IPR050168">
    <property type="entry name" value="AAA_ATPase_domain"/>
</dbReference>
<dbReference type="InterPro" id="IPR003959">
    <property type="entry name" value="ATPase_AAA_core"/>
</dbReference>
<dbReference type="InterPro" id="IPR003960">
    <property type="entry name" value="ATPase_AAA_CS"/>
</dbReference>
<dbReference type="InterPro" id="IPR012340">
    <property type="entry name" value="NA-bd_OB-fold"/>
</dbReference>
<dbReference type="InterPro" id="IPR027417">
    <property type="entry name" value="P-loop_NTPase"/>
</dbReference>
<dbReference type="InterPro" id="IPR032501">
    <property type="entry name" value="Prot_ATP_ID_OB_2nd"/>
</dbReference>
<dbReference type="InterPro" id="IPR041626">
    <property type="entry name" value="Prot_ATP_ID_OB_N"/>
</dbReference>
<dbReference type="InterPro" id="IPR022482">
    <property type="entry name" value="Proteasome_ATPase"/>
</dbReference>
<dbReference type="NCBIfam" id="TIGR03689">
    <property type="entry name" value="pup_AAA"/>
    <property type="match status" value="1"/>
</dbReference>
<dbReference type="PANTHER" id="PTHR23077">
    <property type="entry name" value="AAA-FAMILY ATPASE"/>
    <property type="match status" value="1"/>
</dbReference>
<dbReference type="PANTHER" id="PTHR23077:SF144">
    <property type="entry name" value="PROTEASOME-ASSOCIATED ATPASE"/>
    <property type="match status" value="1"/>
</dbReference>
<dbReference type="Pfam" id="PF00004">
    <property type="entry name" value="AAA"/>
    <property type="match status" value="1"/>
</dbReference>
<dbReference type="Pfam" id="PF16450">
    <property type="entry name" value="Prot_ATP_ID_OB_C"/>
    <property type="match status" value="1"/>
</dbReference>
<dbReference type="Pfam" id="PF17758">
    <property type="entry name" value="Prot_ATP_ID_OB_N"/>
    <property type="match status" value="1"/>
</dbReference>
<dbReference type="SMART" id="SM00382">
    <property type="entry name" value="AAA"/>
    <property type="match status" value="1"/>
</dbReference>
<dbReference type="SUPFAM" id="SSF52540">
    <property type="entry name" value="P-loop containing nucleoside triphosphate hydrolases"/>
    <property type="match status" value="1"/>
</dbReference>
<dbReference type="PROSITE" id="PS00674">
    <property type="entry name" value="AAA"/>
    <property type="match status" value="1"/>
</dbReference>
<comment type="function">
    <text evidence="1">ATPase which is responsible for recognizing, binding, unfolding and translocation of pupylated proteins into the bacterial 20S proteasome core particle. May be essential for opening the gate of the 20S proteasome via an interaction with its C-terminus, thereby allowing substrate entry and access to the site of proteolysis. Thus, the C-termini of the proteasomal ATPase may function like a 'key in a lock' to induce gate opening and therefore regulate proteolysis.</text>
</comment>
<comment type="pathway">
    <text evidence="1">Protein degradation; proteasomal Pup-dependent pathway.</text>
</comment>
<comment type="subunit">
    <text evidence="1">Homohexamer. Assembles into a hexameric ring structure that caps the 20S proteasome core. Strongly interacts with the prokaryotic ubiquitin-like protein Pup through a hydrophobic interface; the interacting region of ARC lies in its N-terminal coiled-coil domain. There is one Pup binding site per ARC hexamer ring. Upon ATP-binding, the C-terminus of ARC interacts with the alpha-rings of the proteasome core, possibly by binding to the intersubunit pockets.</text>
</comment>
<comment type="domain">
    <text evidence="1">Consists of three main regions, an N-terminal coiled-coil domain that binds to protein Pup and functions as a docking station, an interdomain involved in ARC hexamerization, and a C-terminal ATPase domain of the AAA type.</text>
</comment>
<comment type="disruption phenotype">
    <text evidence="3">Mutants show a reduction in the in vivo growth rate, but still persist in mouse lungs, and elicit reduced levels of interferon-gamma production in the lungs. Expression of the genes lat and MT3159 are highly up-regulated.</text>
</comment>
<comment type="biotechnology">
    <text evidence="3">When used as an immunizing agent, the mpa deletion mutant provides significant protection against challenge with a virulent strain of M.tuberculosis. It shows interesting properties as a live attenuated vaccine for tuberculosis and could play a role in generating a safe and effective M.tuberculosis-derived vaccine.</text>
</comment>
<comment type="similarity">
    <text evidence="1">Belongs to the AAA ATPase family.</text>
</comment>
<gene>
    <name evidence="1" type="primary">mpa</name>
    <name type="ordered locus">MT2175</name>
</gene>
<protein>
    <recommendedName>
        <fullName evidence="1">Proteasome-associated ATPase</fullName>
    </recommendedName>
    <alternativeName>
        <fullName evidence="1">AAA ATPase forming ring-shaped complexes</fullName>
        <shortName evidence="1">ARC</shortName>
    </alternativeName>
    <alternativeName>
        <fullName evidence="1">Mycobacterial proteasome ATPase</fullName>
    </alternativeName>
</protein>
<proteinExistence type="evidence at protein level"/>
<evidence type="ECO:0000255" key="1">
    <source>
        <dbReference type="HAMAP-Rule" id="MF_02112"/>
    </source>
</evidence>
<evidence type="ECO:0000256" key="2">
    <source>
        <dbReference type="SAM" id="MobiDB-lite"/>
    </source>
</evidence>
<evidence type="ECO:0000269" key="3">
    <source>
    </source>
</evidence>
<sequence length="609" mass="67401">MGESERSEAFGIPRDSPLSSGDAAELEQLRREAAVLREQLENAVGSHAPTRSARDIHQLEARIDSLAARNSKLMETLKEARQQLLALREEVDRLGQPPSGYGVLLATHDDDTVDVFTSGRKMRLTCSPNIDAASLKKGQTVRLNEALTVVEAGTFEAVGEISTLREILADGHRALVVGHADEERVVWLADPLIAEDLPDGLPEALNDDTRPRKLRPGDSLLVDTKAGYAFERIPKAEVEDLVLEEVPDVSYADIGGLSRQIEQIRDAVELPFLHKELYREYSLRPPKGVLLYGPPGCGKTLIAKAVANSLAKKMAEVRGDDAHEAKSYFLNIKGPELLNKFVGETERHIRLIFQRAREKASEGTPVIVFFDEMDSIFRTRGTGVSSDVETTVVPQLLSEIDGVEGLENVIVIGASNREDMIDPAILRPGRLDVKIKIERPDAEAAQDIYSKYLTEFLPVHADDLAEFDGDRSACIKAMIEKVVDRMYAEIDDNRFLEVTYANGDKEVMYFKDFNSGAMIQNVVDRAKKNAIKSVLETGQPGLRIQHLLDSIVDEFAENEDLPNTTNPDDWARISGKKGERIVYIRTLVTGKSSSASRAIDTESNLGQYL</sequence>
<reference key="1">
    <citation type="journal article" date="2002" name="J. Bacteriol.">
        <title>Whole-genome comparison of Mycobacterium tuberculosis clinical and laboratory strains.</title>
        <authorList>
            <person name="Fleischmann R.D."/>
            <person name="Alland D."/>
            <person name="Eisen J.A."/>
            <person name="Carpenter L."/>
            <person name="White O."/>
            <person name="Peterson J.D."/>
            <person name="DeBoy R.T."/>
            <person name="Dodson R.J."/>
            <person name="Gwinn M.L."/>
            <person name="Haft D.H."/>
            <person name="Hickey E.K."/>
            <person name="Kolonay J.F."/>
            <person name="Nelson W.C."/>
            <person name="Umayam L.A."/>
            <person name="Ermolaeva M.D."/>
            <person name="Salzberg S.L."/>
            <person name="Delcher A."/>
            <person name="Utterback T.R."/>
            <person name="Weidman J.F."/>
            <person name="Khouri H.M."/>
            <person name="Gill J."/>
            <person name="Mikula A."/>
            <person name="Bishai W."/>
            <person name="Jacobs W.R. Jr."/>
            <person name="Venter J.C."/>
            <person name="Fraser C.M."/>
        </authorList>
    </citation>
    <scope>NUCLEOTIDE SEQUENCE [LARGE SCALE GENOMIC DNA]</scope>
    <source>
        <strain>CDC 1551 / Oshkosh</strain>
    </source>
</reference>
<reference key="2">
    <citation type="journal article" date="2006" name="J. Infect. Dis.">
        <title>Deletion of a Mycobacterium tuberculosis proteasomal ATPase homologue gene produces a slow-growing strain that persists in host tissues.</title>
        <authorList>
            <person name="Lamichhane G."/>
            <person name="Raghunand T.R."/>
            <person name="Morrison N.E."/>
            <person name="Woolwine S.C."/>
            <person name="Tyagi S."/>
            <person name="Kandavelou K."/>
            <person name="Bishai W.R."/>
        </authorList>
    </citation>
    <scope>BIOTECHNOLOGY</scope>
    <scope>DISRUPTION PHENOTYPE</scope>
    <source>
        <strain>CDC 1551 / Oshkosh</strain>
    </source>
</reference>
<name>ARC_MYCTO</name>
<feature type="chain" id="PRO_0000426745" description="Proteasome-associated ATPase">
    <location>
        <begin position="1"/>
        <end position="609"/>
    </location>
</feature>
<feature type="region of interest" description="Disordered" evidence="2">
    <location>
        <begin position="1"/>
        <end position="24"/>
    </location>
</feature>
<feature type="region of interest" description="Docks into pockets in the proteasome alpha-ring" evidence="1">
    <location>
        <begin position="608"/>
        <end position="609"/>
    </location>
</feature>
<feature type="coiled-coil region" evidence="1">
    <location>
        <begin position="20"/>
        <end position="96"/>
    </location>
</feature>
<feature type="binding site" evidence="1">
    <location>
        <begin position="296"/>
        <end position="301"/>
    </location>
    <ligand>
        <name>ATP</name>
        <dbReference type="ChEBI" id="CHEBI:30616"/>
    </ligand>
</feature>
<organism>
    <name type="scientific">Mycobacterium tuberculosis (strain CDC 1551 / Oshkosh)</name>
    <dbReference type="NCBI Taxonomy" id="83331"/>
    <lineage>
        <taxon>Bacteria</taxon>
        <taxon>Bacillati</taxon>
        <taxon>Actinomycetota</taxon>
        <taxon>Actinomycetes</taxon>
        <taxon>Mycobacteriales</taxon>
        <taxon>Mycobacteriaceae</taxon>
        <taxon>Mycobacterium</taxon>
        <taxon>Mycobacterium tuberculosis complex</taxon>
    </lineage>
</organism>